<gene>
    <name evidence="1" type="primary">truD</name>
    <name type="ordered locus">YPTS_0806</name>
</gene>
<comment type="function">
    <text evidence="1">Responsible for synthesis of pseudouridine from uracil-13 in transfer RNAs.</text>
</comment>
<comment type="catalytic activity">
    <reaction evidence="1">
        <text>uridine(13) in tRNA = pseudouridine(13) in tRNA</text>
        <dbReference type="Rhea" id="RHEA:42540"/>
        <dbReference type="Rhea" id="RHEA-COMP:10105"/>
        <dbReference type="Rhea" id="RHEA-COMP:10106"/>
        <dbReference type="ChEBI" id="CHEBI:65314"/>
        <dbReference type="ChEBI" id="CHEBI:65315"/>
        <dbReference type="EC" id="5.4.99.27"/>
    </reaction>
</comment>
<comment type="similarity">
    <text evidence="1">Belongs to the pseudouridine synthase TruD family.</text>
</comment>
<proteinExistence type="inferred from homology"/>
<keyword id="KW-0413">Isomerase</keyword>
<keyword id="KW-0819">tRNA processing</keyword>
<protein>
    <recommendedName>
        <fullName evidence="1">tRNA pseudouridine synthase D</fullName>
        <ecNumber evidence="1">5.4.99.27</ecNumber>
    </recommendedName>
    <alternativeName>
        <fullName evidence="1">tRNA pseudouridine(13) synthase</fullName>
    </alternativeName>
    <alternativeName>
        <fullName evidence="1">tRNA pseudouridylate synthase D</fullName>
    </alternativeName>
    <alternativeName>
        <fullName evidence="1">tRNA-uridine isomerase D</fullName>
    </alternativeName>
</protein>
<feature type="chain" id="PRO_1000136860" description="tRNA pseudouridine synthase D">
    <location>
        <begin position="1"/>
        <end position="349"/>
    </location>
</feature>
<feature type="domain" description="TRUD" evidence="1">
    <location>
        <begin position="154"/>
        <end position="302"/>
    </location>
</feature>
<feature type="active site" description="Nucleophile" evidence="1">
    <location>
        <position position="79"/>
    </location>
</feature>
<feature type="binding site" evidence="1">
    <location>
        <position position="26"/>
    </location>
    <ligand>
        <name>substrate</name>
    </ligand>
</feature>
<feature type="binding site" evidence="1">
    <location>
        <position position="128"/>
    </location>
    <ligand>
        <name>substrate</name>
    </ligand>
</feature>
<feature type="binding site" evidence="1">
    <location>
        <position position="328"/>
    </location>
    <ligand>
        <name>substrate</name>
    </ligand>
</feature>
<name>TRUD_YERPB</name>
<sequence>MDMENLTWLHGKPTASGILKANPEDFVVVEDLGFEPDGEGEHLLVRIRKNGCNTQFVADYLARFAKLHPRLVSYAGLKDRHAVTEQWFCLHLPGKEAPDLATFELEGCEVLEAVRHKRKLRIGSLKGNAFTLVLRHITDRQDVEQRLQQIAAQGVPNYFGSQRFGRGGNNLVQARLWANNEIRVKERSKRSFYLSASRSAMFNLISSHRLAQQLSTTVLEGDALQLSGRGSWFVAQADELATLQQRVTAGELNITAPLPGDSELGTHGEALAFEQACLAEQTELLSLIKHERVEGSRRAVLLKPQNMISNWWDDVTLELSFWLPAGSFATSVVREIMNQDRADDTDIIE</sequence>
<dbReference type="EC" id="5.4.99.27" evidence="1"/>
<dbReference type="EMBL" id="CP001048">
    <property type="protein sequence ID" value="ACC87790.1"/>
    <property type="molecule type" value="Genomic_DNA"/>
</dbReference>
<dbReference type="RefSeq" id="WP_012413490.1">
    <property type="nucleotide sequence ID" value="NZ_CP009780.1"/>
</dbReference>
<dbReference type="SMR" id="B2K579"/>
<dbReference type="GeneID" id="49787220"/>
<dbReference type="KEGG" id="ypb:YPTS_0806"/>
<dbReference type="PATRIC" id="fig|502801.10.peg.137"/>
<dbReference type="GO" id="GO:0005829">
    <property type="term" value="C:cytosol"/>
    <property type="evidence" value="ECO:0007669"/>
    <property type="project" value="TreeGrafter"/>
</dbReference>
<dbReference type="GO" id="GO:0003723">
    <property type="term" value="F:RNA binding"/>
    <property type="evidence" value="ECO:0007669"/>
    <property type="project" value="InterPro"/>
</dbReference>
<dbReference type="GO" id="GO:0160150">
    <property type="term" value="F:tRNA pseudouridine(13) synthase activity"/>
    <property type="evidence" value="ECO:0007669"/>
    <property type="project" value="UniProtKB-EC"/>
</dbReference>
<dbReference type="GO" id="GO:0031119">
    <property type="term" value="P:tRNA pseudouridine synthesis"/>
    <property type="evidence" value="ECO:0007669"/>
    <property type="project" value="UniProtKB-UniRule"/>
</dbReference>
<dbReference type="CDD" id="cd02575">
    <property type="entry name" value="PseudoU_synth_EcTruD"/>
    <property type="match status" value="1"/>
</dbReference>
<dbReference type="FunFam" id="3.30.2340.10:FF:000001">
    <property type="entry name" value="tRNA pseudouridine synthase D"/>
    <property type="match status" value="1"/>
</dbReference>
<dbReference type="FunFam" id="3.30.2350.20:FF:000001">
    <property type="entry name" value="tRNA pseudouridine synthase D"/>
    <property type="match status" value="1"/>
</dbReference>
<dbReference type="Gene3D" id="3.30.2350.20">
    <property type="entry name" value="TruD, catalytic domain"/>
    <property type="match status" value="1"/>
</dbReference>
<dbReference type="Gene3D" id="3.30.2340.10">
    <property type="entry name" value="TruD, insertion domain"/>
    <property type="match status" value="1"/>
</dbReference>
<dbReference type="HAMAP" id="MF_01082">
    <property type="entry name" value="TruD"/>
    <property type="match status" value="1"/>
</dbReference>
<dbReference type="InterPro" id="IPR020103">
    <property type="entry name" value="PsdUridine_synth_cat_dom_sf"/>
</dbReference>
<dbReference type="InterPro" id="IPR001656">
    <property type="entry name" value="PsdUridine_synth_TruD"/>
</dbReference>
<dbReference type="InterPro" id="IPR020119">
    <property type="entry name" value="PsdUridine_synth_TruD_CS"/>
</dbReference>
<dbReference type="InterPro" id="IPR011760">
    <property type="entry name" value="PsdUridine_synth_TruD_insert"/>
</dbReference>
<dbReference type="InterPro" id="IPR042214">
    <property type="entry name" value="TruD_catalytic"/>
</dbReference>
<dbReference type="InterPro" id="IPR043165">
    <property type="entry name" value="TruD_insert_sf"/>
</dbReference>
<dbReference type="InterPro" id="IPR050170">
    <property type="entry name" value="TruD_pseudoU_synthase"/>
</dbReference>
<dbReference type="NCBIfam" id="NF002155">
    <property type="entry name" value="PRK00984.1-4"/>
    <property type="match status" value="1"/>
</dbReference>
<dbReference type="NCBIfam" id="TIGR00094">
    <property type="entry name" value="tRNA_TruD_broad"/>
    <property type="match status" value="1"/>
</dbReference>
<dbReference type="PANTHER" id="PTHR47811">
    <property type="entry name" value="TRNA PSEUDOURIDINE SYNTHASE D"/>
    <property type="match status" value="1"/>
</dbReference>
<dbReference type="PANTHER" id="PTHR47811:SF1">
    <property type="entry name" value="TRNA PSEUDOURIDINE SYNTHASE D"/>
    <property type="match status" value="1"/>
</dbReference>
<dbReference type="Pfam" id="PF01142">
    <property type="entry name" value="TruD"/>
    <property type="match status" value="2"/>
</dbReference>
<dbReference type="SUPFAM" id="SSF55120">
    <property type="entry name" value="Pseudouridine synthase"/>
    <property type="match status" value="1"/>
</dbReference>
<dbReference type="PROSITE" id="PS50984">
    <property type="entry name" value="TRUD"/>
    <property type="match status" value="1"/>
</dbReference>
<dbReference type="PROSITE" id="PS01268">
    <property type="entry name" value="UPF0024"/>
    <property type="match status" value="1"/>
</dbReference>
<reference key="1">
    <citation type="submission" date="2008-04" db="EMBL/GenBank/DDBJ databases">
        <title>Complete sequence of Yersinia pseudotuberculosis PB1/+.</title>
        <authorList>
            <person name="Copeland A."/>
            <person name="Lucas S."/>
            <person name="Lapidus A."/>
            <person name="Glavina del Rio T."/>
            <person name="Dalin E."/>
            <person name="Tice H."/>
            <person name="Bruce D."/>
            <person name="Goodwin L."/>
            <person name="Pitluck S."/>
            <person name="Munk A.C."/>
            <person name="Brettin T."/>
            <person name="Detter J.C."/>
            <person name="Han C."/>
            <person name="Tapia R."/>
            <person name="Schmutz J."/>
            <person name="Larimer F."/>
            <person name="Land M."/>
            <person name="Hauser L."/>
            <person name="Challacombe J.F."/>
            <person name="Green L."/>
            <person name="Lindler L.E."/>
            <person name="Nikolich M.P."/>
            <person name="Richardson P."/>
        </authorList>
    </citation>
    <scope>NUCLEOTIDE SEQUENCE [LARGE SCALE GENOMIC DNA]</scope>
    <source>
        <strain>PB1/+</strain>
    </source>
</reference>
<accession>B2K579</accession>
<evidence type="ECO:0000255" key="1">
    <source>
        <dbReference type="HAMAP-Rule" id="MF_01082"/>
    </source>
</evidence>
<organism>
    <name type="scientific">Yersinia pseudotuberculosis serotype IB (strain PB1/+)</name>
    <dbReference type="NCBI Taxonomy" id="502801"/>
    <lineage>
        <taxon>Bacteria</taxon>
        <taxon>Pseudomonadati</taxon>
        <taxon>Pseudomonadota</taxon>
        <taxon>Gammaproteobacteria</taxon>
        <taxon>Enterobacterales</taxon>
        <taxon>Yersiniaceae</taxon>
        <taxon>Yersinia</taxon>
    </lineage>
</organism>